<accession>P74476</accession>
<proteinExistence type="inferred from homology"/>
<evidence type="ECO:0000250" key="1"/>
<evidence type="ECO:0000305" key="2"/>
<organism>
    <name type="scientific">Synechocystis sp. (strain ATCC 27184 / PCC 6803 / Kazusa)</name>
    <dbReference type="NCBI Taxonomy" id="1111708"/>
    <lineage>
        <taxon>Bacteria</taxon>
        <taxon>Bacillati</taxon>
        <taxon>Cyanobacteriota</taxon>
        <taxon>Cyanophyceae</taxon>
        <taxon>Synechococcales</taxon>
        <taxon>Merismopediaceae</taxon>
        <taxon>Synechocystis</taxon>
    </lineage>
</organism>
<reference key="1">
    <citation type="journal article" date="1996" name="DNA Res.">
        <title>Sequence analysis of the genome of the unicellular cyanobacterium Synechocystis sp. strain PCC6803. II. Sequence determination of the entire genome and assignment of potential protein-coding regions.</title>
        <authorList>
            <person name="Kaneko T."/>
            <person name="Sato S."/>
            <person name="Kotani H."/>
            <person name="Tanaka A."/>
            <person name="Asamizu E."/>
            <person name="Nakamura Y."/>
            <person name="Miyajima N."/>
            <person name="Hirosawa M."/>
            <person name="Sugiura M."/>
            <person name="Sasamoto S."/>
            <person name="Kimura T."/>
            <person name="Hosouchi T."/>
            <person name="Matsuno A."/>
            <person name="Muraki A."/>
            <person name="Nakazaki N."/>
            <person name="Naruo K."/>
            <person name="Okumura S."/>
            <person name="Shimpo S."/>
            <person name="Takeuchi C."/>
            <person name="Wada T."/>
            <person name="Watanabe A."/>
            <person name="Yamada M."/>
            <person name="Yasuda M."/>
            <person name="Tabata S."/>
        </authorList>
    </citation>
    <scope>NUCLEOTIDE SEQUENCE [LARGE SCALE GENOMIC DNA]</scope>
    <source>
        <strain>ATCC 27184 / PCC 6803 / Kazusa</strain>
    </source>
</reference>
<keyword id="KW-0963">Cytoplasm</keyword>
<keyword id="KW-0488">Methylation</keyword>
<keyword id="KW-0648">Protein biosynthesis</keyword>
<keyword id="KW-1185">Reference proteome</keyword>
<keyword id="KW-0688">Ribosomal frameshifting</keyword>
<protein>
    <recommendedName>
        <fullName>Peptide chain release factor 2</fullName>
        <shortName>RF-2</shortName>
    </recommendedName>
</protein>
<sequence>MITELTDLKRNLELISSRLGQTQDYLDLPGLKAKVQDLEQCAAQPDFWDDTDQAQQILQTLNETKSQLEQWGIWQQQWQDSQAIVELLELEDDQALLTEAETTLEQLQKELDRWELQQLLSGPYDAKGATLTINAGAGGTDAQDWAEMLLRMYTRWSEKQGYKVHLAEISEGDEAGLKSVTLEIEGRYAYGYLKSEKGTHRLVRISPFNANGKRQTSFAGVEVMPLLGEEAISLDIPDKDLDISTSRAGGKGGQNVNKVETAVRIVHLPTGLAVRCTQERSQLQNKEKALAILKAKLLIVLEEQRAQAIAEIRGDMVEAAWGTQIRNYVFHPYQLVKDLRTNVETTDVGGVMDGELSDFIEAYLRHSARLDS</sequence>
<comment type="function">
    <text evidence="1">Peptide chain release factor 2 directs the termination of translation in response to the peptide chain termination codons UGA and UAA.</text>
</comment>
<comment type="subcellular location">
    <subcellularLocation>
        <location evidence="1">Cytoplasm</location>
    </subcellularLocation>
</comment>
<comment type="PTM">
    <text evidence="1">Methylated by PrmC. Methylation increases the termination efficiency of RF2 (By similarity).</text>
</comment>
<comment type="miscellaneous">
    <text evidence="1">The gene for this protein contains a UGA in-frame termination codon after Leu-26; a naturally occurring frameshift enables complete translation of RF-2. This provides a mechanism for the protein to regulate its own production (By similarity).</text>
</comment>
<comment type="similarity">
    <text evidence="2">Belongs to the prokaryotic/mitochondrial release factor family.</text>
</comment>
<feature type="chain" id="PRO_0000166853" description="Peptide chain release factor 2">
    <location>
        <begin position="1"/>
        <end position="372"/>
    </location>
</feature>
<feature type="modified residue" description="N5-methylglutamine" evidence="1">
    <location>
        <position position="254"/>
    </location>
</feature>
<gene>
    <name type="primary">prfB</name>
    <name type="ordered locus">sll1865</name>
</gene>
<dbReference type="EMBL" id="BA000022">
    <property type="protein sequence ID" value="BAA18577.1"/>
    <property type="status" value="ALT_SEQ"/>
    <property type="molecule type" value="Genomic_DNA"/>
</dbReference>
<dbReference type="PIR" id="S76448">
    <property type="entry name" value="S76448"/>
</dbReference>
<dbReference type="SMR" id="P74476"/>
<dbReference type="FunCoup" id="P74476">
    <property type="interactions" value="419"/>
</dbReference>
<dbReference type="IntAct" id="P74476">
    <property type="interactions" value="2"/>
</dbReference>
<dbReference type="STRING" id="1148.gene:10499459"/>
<dbReference type="PaxDb" id="1148-1653665"/>
<dbReference type="EnsemblBacteria" id="BAA18577">
    <property type="protein sequence ID" value="BAA18577"/>
    <property type="gene ID" value="BAA18577"/>
</dbReference>
<dbReference type="KEGG" id="syn:sll1865"/>
<dbReference type="eggNOG" id="COG1186">
    <property type="taxonomic scope" value="Bacteria"/>
</dbReference>
<dbReference type="InParanoid" id="P74476"/>
<dbReference type="PhylomeDB" id="P74476"/>
<dbReference type="Proteomes" id="UP000001425">
    <property type="component" value="Chromosome"/>
</dbReference>
<dbReference type="GO" id="GO:0005737">
    <property type="term" value="C:cytoplasm"/>
    <property type="evidence" value="ECO:0007669"/>
    <property type="project" value="UniProtKB-SubCell"/>
</dbReference>
<dbReference type="GO" id="GO:0016149">
    <property type="term" value="F:translation release factor activity, codon specific"/>
    <property type="evidence" value="ECO:0007669"/>
    <property type="project" value="UniProtKB-UniRule"/>
</dbReference>
<dbReference type="GO" id="GO:0075523">
    <property type="term" value="P:viral translational frameshifting"/>
    <property type="evidence" value="ECO:0007669"/>
    <property type="project" value="UniProtKB-KW"/>
</dbReference>
<dbReference type="Gene3D" id="3.30.160.20">
    <property type="match status" value="1"/>
</dbReference>
<dbReference type="Gene3D" id="3.30.70.1660">
    <property type="match status" value="1"/>
</dbReference>
<dbReference type="Gene3D" id="1.20.58.410">
    <property type="entry name" value="Release factor"/>
    <property type="match status" value="1"/>
</dbReference>
<dbReference type="HAMAP" id="MF_00094">
    <property type="entry name" value="Rel_fac_2"/>
    <property type="match status" value="1"/>
</dbReference>
<dbReference type="InterPro" id="IPR005139">
    <property type="entry name" value="PCRF"/>
</dbReference>
<dbReference type="InterPro" id="IPR000352">
    <property type="entry name" value="Pep_chain_release_fac_I"/>
</dbReference>
<dbReference type="InterPro" id="IPR045853">
    <property type="entry name" value="Pep_chain_release_fac_I_sf"/>
</dbReference>
<dbReference type="InterPro" id="IPR004374">
    <property type="entry name" value="PrfB"/>
</dbReference>
<dbReference type="NCBIfam" id="TIGR00020">
    <property type="entry name" value="prfB"/>
    <property type="match status" value="1"/>
</dbReference>
<dbReference type="PANTHER" id="PTHR43116:SF3">
    <property type="entry name" value="CLASS I PEPTIDE CHAIN RELEASE FACTOR"/>
    <property type="match status" value="1"/>
</dbReference>
<dbReference type="PANTHER" id="PTHR43116">
    <property type="entry name" value="PEPTIDE CHAIN RELEASE FACTOR 2"/>
    <property type="match status" value="1"/>
</dbReference>
<dbReference type="Pfam" id="PF03462">
    <property type="entry name" value="PCRF"/>
    <property type="match status" value="1"/>
</dbReference>
<dbReference type="Pfam" id="PF00472">
    <property type="entry name" value="RF-1"/>
    <property type="match status" value="1"/>
</dbReference>
<dbReference type="SMART" id="SM00937">
    <property type="entry name" value="PCRF"/>
    <property type="match status" value="1"/>
</dbReference>
<dbReference type="SUPFAM" id="SSF75620">
    <property type="entry name" value="Release factor"/>
    <property type="match status" value="1"/>
</dbReference>
<dbReference type="PROSITE" id="PS00745">
    <property type="entry name" value="RF_PROK_I"/>
    <property type="match status" value="1"/>
</dbReference>
<name>RF2_SYNY3</name>